<name>SHOC2_DANRE</name>
<comment type="function">
    <text evidence="2">Core component of the SHOC2-MRAS-PP1c (SMP) holophosphatase complex that regulates activation of the MAPK pathway (By similarity). Acts as a scaffolding protein in the SMP complex (By similarity). The SMP complex specifically dephosphorylates the inhibitory phosphorylation Raf kinases, stimulating their kinase activities (By similarity). The SMP complex enhances the dephosphorylation activity and substrate specificity of PP1c (By similarity).</text>
</comment>
<comment type="subcellular location">
    <subcellularLocation>
        <location evidence="1">Cytoplasm</location>
    </subcellularLocation>
    <subcellularLocation>
        <location evidence="1">Nucleus</location>
    </subcellularLocation>
</comment>
<comment type="alternative products">
    <event type="alternative splicing"/>
    <isoform>
        <id>Q1L8Y7-1</id>
        <name>1</name>
        <sequence type="displayed"/>
    </isoform>
    <isoform>
        <id>Q1L8Y7-2</id>
        <name>2</name>
        <sequence type="described" ref="VSP_038197"/>
    </isoform>
</comment>
<comment type="similarity">
    <text evidence="5">Belongs to the SHOC2 family.</text>
</comment>
<sequence length="561" mass="62696">MSSTLGKDKDSKEREPKAEGKSKTKGKDAKDGKKDTSGASPAVAFTLDSTIKRPNPPPSTRKKSSNAEVIKELNKCREENSMRLDLSKRSIHLLPSSIKELTQLTELYLYSNKLQSLPPEVGCLSGLVTLALSENSLTSLPDSLDNLKKLRMLDLRHNKLREIPAVVYRVSSLTTLYLRFNRITTVEKDIKNLSKLTMLSIRENKIKQLPAEIGELCNLITLDVAHNQLEHLPKEIGNCTQITNLDLQHNDLLDLPETIGNLASINRLGLRYNRLSAIPRSLAKCRELEELNLENNNISVLPEGLLSSLVNLTSLTLARNCFQSYPVGGPSQFSTIYSLNMEHNRINKIPFGIFSRAKVLSKLNMKDNQLTSLPLDFGTWTSMVELNLATNQLTKIPEDICGLVSLEMLTLSNNLLKKLPYGIGNLRKLRELDLEENKLESLPNEIAYLKDLQKLVLTNNQLTTLPRGIGHLTNLTYLGLGENLLQHLPEEIGTLENLEDLYLNDNPNLHSLPFELALCSKLSIMSIENCPLSHLPPQIVAGGPSFIIQFLKMQGPYRAMV</sequence>
<accession>Q1L8Y7</accession>
<accession>A0JMD9</accession>
<reference key="1">
    <citation type="journal article" date="2013" name="Nature">
        <title>The zebrafish reference genome sequence and its relationship to the human genome.</title>
        <authorList>
            <person name="Howe K."/>
            <person name="Clark M.D."/>
            <person name="Torroja C.F."/>
            <person name="Torrance J."/>
            <person name="Berthelot C."/>
            <person name="Muffato M."/>
            <person name="Collins J.E."/>
            <person name="Humphray S."/>
            <person name="McLaren K."/>
            <person name="Matthews L."/>
            <person name="McLaren S."/>
            <person name="Sealy I."/>
            <person name="Caccamo M."/>
            <person name="Churcher C."/>
            <person name="Scott C."/>
            <person name="Barrett J.C."/>
            <person name="Koch R."/>
            <person name="Rauch G.J."/>
            <person name="White S."/>
            <person name="Chow W."/>
            <person name="Kilian B."/>
            <person name="Quintais L.T."/>
            <person name="Guerra-Assuncao J.A."/>
            <person name="Zhou Y."/>
            <person name="Gu Y."/>
            <person name="Yen J."/>
            <person name="Vogel J.H."/>
            <person name="Eyre T."/>
            <person name="Redmond S."/>
            <person name="Banerjee R."/>
            <person name="Chi J."/>
            <person name="Fu B."/>
            <person name="Langley E."/>
            <person name="Maguire S.F."/>
            <person name="Laird G.K."/>
            <person name="Lloyd D."/>
            <person name="Kenyon E."/>
            <person name="Donaldson S."/>
            <person name="Sehra H."/>
            <person name="Almeida-King J."/>
            <person name="Loveland J."/>
            <person name="Trevanion S."/>
            <person name="Jones M."/>
            <person name="Quail M."/>
            <person name="Willey D."/>
            <person name="Hunt A."/>
            <person name="Burton J."/>
            <person name="Sims S."/>
            <person name="McLay K."/>
            <person name="Plumb B."/>
            <person name="Davis J."/>
            <person name="Clee C."/>
            <person name="Oliver K."/>
            <person name="Clark R."/>
            <person name="Riddle C."/>
            <person name="Elliot D."/>
            <person name="Threadgold G."/>
            <person name="Harden G."/>
            <person name="Ware D."/>
            <person name="Begum S."/>
            <person name="Mortimore B."/>
            <person name="Kerry G."/>
            <person name="Heath P."/>
            <person name="Phillimore B."/>
            <person name="Tracey A."/>
            <person name="Corby N."/>
            <person name="Dunn M."/>
            <person name="Johnson C."/>
            <person name="Wood J."/>
            <person name="Clark S."/>
            <person name="Pelan S."/>
            <person name="Griffiths G."/>
            <person name="Smith M."/>
            <person name="Glithero R."/>
            <person name="Howden P."/>
            <person name="Barker N."/>
            <person name="Lloyd C."/>
            <person name="Stevens C."/>
            <person name="Harley J."/>
            <person name="Holt K."/>
            <person name="Panagiotidis G."/>
            <person name="Lovell J."/>
            <person name="Beasley H."/>
            <person name="Henderson C."/>
            <person name="Gordon D."/>
            <person name="Auger K."/>
            <person name="Wright D."/>
            <person name="Collins J."/>
            <person name="Raisen C."/>
            <person name="Dyer L."/>
            <person name="Leung K."/>
            <person name="Robertson L."/>
            <person name="Ambridge K."/>
            <person name="Leongamornlert D."/>
            <person name="McGuire S."/>
            <person name="Gilderthorp R."/>
            <person name="Griffiths C."/>
            <person name="Manthravadi D."/>
            <person name="Nichol S."/>
            <person name="Barker G."/>
            <person name="Whitehead S."/>
            <person name="Kay M."/>
            <person name="Brown J."/>
            <person name="Murnane C."/>
            <person name="Gray E."/>
            <person name="Humphries M."/>
            <person name="Sycamore N."/>
            <person name="Barker D."/>
            <person name="Saunders D."/>
            <person name="Wallis J."/>
            <person name="Babbage A."/>
            <person name="Hammond S."/>
            <person name="Mashreghi-Mohammadi M."/>
            <person name="Barr L."/>
            <person name="Martin S."/>
            <person name="Wray P."/>
            <person name="Ellington A."/>
            <person name="Matthews N."/>
            <person name="Ellwood M."/>
            <person name="Woodmansey R."/>
            <person name="Clark G."/>
            <person name="Cooper J."/>
            <person name="Tromans A."/>
            <person name="Grafham D."/>
            <person name="Skuce C."/>
            <person name="Pandian R."/>
            <person name="Andrews R."/>
            <person name="Harrison E."/>
            <person name="Kimberley A."/>
            <person name="Garnett J."/>
            <person name="Fosker N."/>
            <person name="Hall R."/>
            <person name="Garner P."/>
            <person name="Kelly D."/>
            <person name="Bird C."/>
            <person name="Palmer S."/>
            <person name="Gehring I."/>
            <person name="Berger A."/>
            <person name="Dooley C.M."/>
            <person name="Ersan-Urun Z."/>
            <person name="Eser C."/>
            <person name="Geiger H."/>
            <person name="Geisler M."/>
            <person name="Karotki L."/>
            <person name="Kirn A."/>
            <person name="Konantz J."/>
            <person name="Konantz M."/>
            <person name="Oberlander M."/>
            <person name="Rudolph-Geiger S."/>
            <person name="Teucke M."/>
            <person name="Lanz C."/>
            <person name="Raddatz G."/>
            <person name="Osoegawa K."/>
            <person name="Zhu B."/>
            <person name="Rapp A."/>
            <person name="Widaa S."/>
            <person name="Langford C."/>
            <person name="Yang F."/>
            <person name="Schuster S.C."/>
            <person name="Carter N.P."/>
            <person name="Harrow J."/>
            <person name="Ning Z."/>
            <person name="Herrero J."/>
            <person name="Searle S.M."/>
            <person name="Enright A."/>
            <person name="Geisler R."/>
            <person name="Plasterk R.H."/>
            <person name="Lee C."/>
            <person name="Westerfield M."/>
            <person name="de Jong P.J."/>
            <person name="Zon L.I."/>
            <person name="Postlethwait J.H."/>
            <person name="Nusslein-Volhard C."/>
            <person name="Hubbard T.J."/>
            <person name="Roest Crollius H."/>
            <person name="Rogers J."/>
            <person name="Stemple D.L."/>
        </authorList>
    </citation>
    <scope>NUCLEOTIDE SEQUENCE [LARGE SCALE GENOMIC DNA]</scope>
    <source>
        <strain>Tuebingen</strain>
    </source>
</reference>
<reference key="2">
    <citation type="submission" date="2007-12" db="EMBL/GenBank/DDBJ databases">
        <authorList>
            <consortium name="NIH - Zebrafish Gene Collection (ZGC) project"/>
        </authorList>
    </citation>
    <scope>NUCLEOTIDE SEQUENCE [LARGE SCALE MRNA] (ISOFORMS 1 AND 2)</scope>
</reference>
<organism>
    <name type="scientific">Danio rerio</name>
    <name type="common">Zebrafish</name>
    <name type="synonym">Brachydanio rerio</name>
    <dbReference type="NCBI Taxonomy" id="7955"/>
    <lineage>
        <taxon>Eukaryota</taxon>
        <taxon>Metazoa</taxon>
        <taxon>Chordata</taxon>
        <taxon>Craniata</taxon>
        <taxon>Vertebrata</taxon>
        <taxon>Euteleostomi</taxon>
        <taxon>Actinopterygii</taxon>
        <taxon>Neopterygii</taxon>
        <taxon>Teleostei</taxon>
        <taxon>Ostariophysi</taxon>
        <taxon>Cypriniformes</taxon>
        <taxon>Danionidae</taxon>
        <taxon>Danioninae</taxon>
        <taxon>Danio</taxon>
    </lineage>
</organism>
<feature type="chain" id="PRO_0000385628" description="Leucine-rich repeat protein SHOC-2">
    <location>
        <begin position="1"/>
        <end position="561"/>
    </location>
</feature>
<feature type="repeat" description="LRR 1">
    <location>
        <begin position="80"/>
        <end position="101"/>
    </location>
</feature>
<feature type="repeat" description="LRR 2">
    <location>
        <begin position="103"/>
        <end position="124"/>
    </location>
</feature>
<feature type="repeat" description="LRR 3">
    <location>
        <begin position="126"/>
        <end position="148"/>
    </location>
</feature>
<feature type="repeat" description="LRR 4">
    <location>
        <begin position="149"/>
        <end position="170"/>
    </location>
</feature>
<feature type="repeat" description="LRR 5">
    <location>
        <begin position="172"/>
        <end position="193"/>
    </location>
</feature>
<feature type="repeat" description="LRR 6">
    <location>
        <begin position="195"/>
        <end position="216"/>
    </location>
</feature>
<feature type="repeat" description="LRR 7">
    <location>
        <begin position="218"/>
        <end position="239"/>
    </location>
</feature>
<feature type="repeat" description="LRR 8">
    <location>
        <begin position="241"/>
        <end position="262"/>
    </location>
</feature>
<feature type="repeat" description="LRR 9">
    <location>
        <begin position="264"/>
        <end position="286"/>
    </location>
</feature>
<feature type="repeat" description="LRR 10">
    <location>
        <begin position="287"/>
        <end position="308"/>
    </location>
</feature>
<feature type="repeat" description="LRR 11">
    <location>
        <begin position="311"/>
        <end position="332"/>
    </location>
</feature>
<feature type="repeat" description="LRR 12">
    <location>
        <begin position="335"/>
        <end position="356"/>
    </location>
</feature>
<feature type="repeat" description="LRR 13">
    <location>
        <begin position="359"/>
        <end position="379"/>
    </location>
</feature>
<feature type="repeat" description="LRR 14">
    <location>
        <begin position="382"/>
        <end position="403"/>
    </location>
</feature>
<feature type="repeat" description="LRR 15">
    <location>
        <begin position="405"/>
        <end position="427"/>
    </location>
</feature>
<feature type="repeat" description="LRR 16">
    <location>
        <begin position="428"/>
        <end position="449"/>
    </location>
</feature>
<feature type="repeat" description="LRR 17">
    <location>
        <begin position="451"/>
        <end position="473"/>
    </location>
</feature>
<feature type="repeat" description="LRR 18">
    <location>
        <begin position="474"/>
        <end position="495"/>
    </location>
</feature>
<feature type="repeat" description="LRR 19">
    <location>
        <begin position="497"/>
        <end position="519"/>
    </location>
</feature>
<feature type="repeat" description="LRR 20">
    <location>
        <begin position="521"/>
        <end position="542"/>
    </location>
</feature>
<feature type="region of interest" description="Disordered" evidence="3">
    <location>
        <begin position="1"/>
        <end position="67"/>
    </location>
</feature>
<feature type="compositionally biased region" description="Basic and acidic residues" evidence="3">
    <location>
        <begin position="1"/>
        <end position="36"/>
    </location>
</feature>
<feature type="splice variant" id="VSP_038197" description="In isoform 2." evidence="4">
    <original>NLASINRLGLRYNRLSAIPRSLAKCRELEELNLENNNISVLPEGLLSSLVNLTSLTLARNCFQSYPVGGPSQFSTIYSLNMEHNRINKIPFGIFSRAKVLSKLNMKDNQLTSLPLDFGTWTSMVELNLATNQLTKIPEDICGLVSLEMLTLSNNLLKKLPYGIGNLRKLRELDLEENKLESLPNEIAYLKDLQKLVLTNNQLTTLPRGIGHLTNLTYLGLGENLLQHLPEEIGTLENLEDLYLNDNPNLHSLPFELALCSKLSIMSIENCPLSHLPPQIVAGGPSFIIQFLKMQGPYRAMV</original>
    <variation>EDELKKTSLGLLPVFLF</variation>
    <location>
        <begin position="261"/>
        <end position="561"/>
    </location>
</feature>
<protein>
    <recommendedName>
        <fullName>Leucine-rich repeat protein SHOC-2</fullName>
    </recommendedName>
    <alternativeName>
        <fullName>Protein soc-2 homolog</fullName>
    </alternativeName>
    <alternativeName>
        <fullName>Protein sur-8 homolog</fullName>
    </alternativeName>
</protein>
<gene>
    <name type="primary">shoc2</name>
    <name type="ORF">si:ch211-159c12.3</name>
    <name type="ORF">si:ch211-197i12.3</name>
</gene>
<evidence type="ECO:0000250" key="1"/>
<evidence type="ECO:0000250" key="2">
    <source>
        <dbReference type="UniProtKB" id="Q9UQ13"/>
    </source>
</evidence>
<evidence type="ECO:0000256" key="3">
    <source>
        <dbReference type="SAM" id="MobiDB-lite"/>
    </source>
</evidence>
<evidence type="ECO:0000303" key="4">
    <source ref="2"/>
</evidence>
<evidence type="ECO:0000305" key="5"/>
<proteinExistence type="evidence at transcript level"/>
<dbReference type="EMBL" id="AL772158">
    <property type="protein sequence ID" value="CAK04058.1"/>
    <property type="molecule type" value="Genomic_DNA"/>
</dbReference>
<dbReference type="EMBL" id="CR450802">
    <property type="protein sequence ID" value="CAK04354.1"/>
    <property type="molecule type" value="Genomic_DNA"/>
</dbReference>
<dbReference type="EMBL" id="BC125839">
    <property type="protein sequence ID" value="AAI25840.1"/>
    <property type="molecule type" value="mRNA"/>
</dbReference>
<dbReference type="EMBL" id="BC155579">
    <property type="protein sequence ID" value="AAI55580.1"/>
    <property type="molecule type" value="mRNA"/>
</dbReference>
<dbReference type="RefSeq" id="NP_001038251.1">
    <molecule id="Q1L8Y7-1"/>
    <property type="nucleotide sequence ID" value="NM_001044786.1"/>
</dbReference>
<dbReference type="RefSeq" id="XP_005161853.1">
    <molecule id="Q1L8Y7-1"/>
    <property type="nucleotide sequence ID" value="XM_005161796.5"/>
</dbReference>
<dbReference type="SMR" id="Q1L8Y7"/>
<dbReference type="FunCoup" id="Q1L8Y7">
    <property type="interactions" value="1420"/>
</dbReference>
<dbReference type="STRING" id="7955.ENSDARP00000059881"/>
<dbReference type="PaxDb" id="7955-ENSDARP00000110805"/>
<dbReference type="Ensembl" id="ENSDART00000059882">
    <molecule id="Q1L8Y7-1"/>
    <property type="protein sequence ID" value="ENSDARP00000059881"/>
    <property type="gene ID" value="ENSDARG00000040853"/>
</dbReference>
<dbReference type="Ensembl" id="ENSDART00000184718">
    <molecule id="Q1L8Y7-1"/>
    <property type="protein sequence ID" value="ENSDARP00000150764"/>
    <property type="gene ID" value="ENSDARG00000116564"/>
</dbReference>
<dbReference type="Ensembl" id="ENSDART00000191544">
    <molecule id="Q1L8Y7-1"/>
    <property type="protein sequence ID" value="ENSDARP00000156603"/>
    <property type="gene ID" value="ENSDARG00000112058"/>
</dbReference>
<dbReference type="GeneID" id="555476"/>
<dbReference type="KEGG" id="dre:555476"/>
<dbReference type="AGR" id="ZFIN:ZDB-GENE-050208-523"/>
<dbReference type="CTD" id="8036"/>
<dbReference type="ZFIN" id="ZDB-GENE-050208-523">
    <property type="gene designation" value="shoc2"/>
</dbReference>
<dbReference type="eggNOG" id="KOG0619">
    <property type="taxonomic scope" value="Eukaryota"/>
</dbReference>
<dbReference type="HOGENOM" id="CLU_000288_18_23_1"/>
<dbReference type="InParanoid" id="Q1L8Y7"/>
<dbReference type="OMA" id="NQFTSYP"/>
<dbReference type="OrthoDB" id="676979at2759"/>
<dbReference type="PhylomeDB" id="Q1L8Y7"/>
<dbReference type="TreeFam" id="TF315742"/>
<dbReference type="Reactome" id="R-DRE-5673000">
    <property type="pathway name" value="RAF activation"/>
</dbReference>
<dbReference type="PRO" id="PR:Q1L8Y7"/>
<dbReference type="Proteomes" id="UP000000437">
    <property type="component" value="Alternate scaffold 22"/>
</dbReference>
<dbReference type="Proteomes" id="UP000000437">
    <property type="component" value="Chromosome 22"/>
</dbReference>
<dbReference type="Bgee" id="ENSDARG00000040853">
    <property type="expression patterns" value="Expressed in mature ovarian follicle and 20 other cell types or tissues"/>
</dbReference>
<dbReference type="GO" id="GO:0005737">
    <property type="term" value="C:cytoplasm"/>
    <property type="evidence" value="ECO:0000250"/>
    <property type="project" value="UniProtKB"/>
</dbReference>
<dbReference type="GO" id="GO:0005634">
    <property type="term" value="C:nucleus"/>
    <property type="evidence" value="ECO:0000250"/>
    <property type="project" value="UniProtKB"/>
</dbReference>
<dbReference type="GO" id="GO:0000164">
    <property type="term" value="C:protein phosphatase type 1 complex"/>
    <property type="evidence" value="ECO:0000250"/>
    <property type="project" value="UniProtKB"/>
</dbReference>
<dbReference type="GO" id="GO:0019903">
    <property type="term" value="F:protein phosphatase binding"/>
    <property type="evidence" value="ECO:0000250"/>
    <property type="project" value="UniProtKB"/>
</dbReference>
<dbReference type="GO" id="GO:0005225">
    <property type="term" value="F:volume-sensitive anion channel activity"/>
    <property type="evidence" value="ECO:0000318"/>
    <property type="project" value="GO_Central"/>
</dbReference>
<dbReference type="GO" id="GO:0140361">
    <property type="term" value="P:cyclic-GMP-AMP transmembrane import across plasma membrane"/>
    <property type="evidence" value="ECO:0000318"/>
    <property type="project" value="GO_Central"/>
</dbReference>
<dbReference type="GO" id="GO:0035556">
    <property type="term" value="P:intracellular signal transduction"/>
    <property type="evidence" value="ECO:0000318"/>
    <property type="project" value="GO_Central"/>
</dbReference>
<dbReference type="GO" id="GO:0046579">
    <property type="term" value="P:positive regulation of Ras protein signal transduction"/>
    <property type="evidence" value="ECO:0000250"/>
    <property type="project" value="UniProtKB"/>
</dbReference>
<dbReference type="FunFam" id="3.80.10.10:FF:000115">
    <property type="entry name" value="leucine-rich repeat protein SHOC-2"/>
    <property type="match status" value="1"/>
</dbReference>
<dbReference type="FunFam" id="3.80.10.10:FF:000327">
    <property type="entry name" value="leucine-rich repeat protein SHOC-2 isoform X2"/>
    <property type="match status" value="1"/>
</dbReference>
<dbReference type="FunFam" id="3.80.10.10:FF:000093">
    <property type="entry name" value="Putative leucine-rich repeat protein shoc-2"/>
    <property type="match status" value="1"/>
</dbReference>
<dbReference type="Gene3D" id="3.80.10.10">
    <property type="entry name" value="Ribonuclease Inhibitor"/>
    <property type="match status" value="4"/>
</dbReference>
<dbReference type="InterPro" id="IPR001611">
    <property type="entry name" value="Leu-rich_rpt"/>
</dbReference>
<dbReference type="InterPro" id="IPR003591">
    <property type="entry name" value="Leu-rich_rpt_typical-subtyp"/>
</dbReference>
<dbReference type="InterPro" id="IPR032675">
    <property type="entry name" value="LRR_dom_sf"/>
</dbReference>
<dbReference type="InterPro" id="IPR050216">
    <property type="entry name" value="LRR_domain-containing"/>
</dbReference>
<dbReference type="InterPro" id="IPR055414">
    <property type="entry name" value="LRR_R13L4/SHOC2-like"/>
</dbReference>
<dbReference type="PANTHER" id="PTHR48051">
    <property type="match status" value="1"/>
</dbReference>
<dbReference type="PANTHER" id="PTHR48051:SF1">
    <property type="entry name" value="RAS SUPPRESSOR PROTEIN 1"/>
    <property type="match status" value="1"/>
</dbReference>
<dbReference type="Pfam" id="PF23598">
    <property type="entry name" value="LRR_14"/>
    <property type="match status" value="2"/>
</dbReference>
<dbReference type="Pfam" id="PF13855">
    <property type="entry name" value="LRR_8"/>
    <property type="match status" value="1"/>
</dbReference>
<dbReference type="SMART" id="SM00364">
    <property type="entry name" value="LRR_BAC"/>
    <property type="match status" value="12"/>
</dbReference>
<dbReference type="SMART" id="SM00365">
    <property type="entry name" value="LRR_SD22"/>
    <property type="match status" value="6"/>
</dbReference>
<dbReference type="SMART" id="SM00369">
    <property type="entry name" value="LRR_TYP"/>
    <property type="match status" value="15"/>
</dbReference>
<dbReference type="SUPFAM" id="SSF52058">
    <property type="entry name" value="L domain-like"/>
    <property type="match status" value="1"/>
</dbReference>
<dbReference type="SUPFAM" id="SSF52047">
    <property type="entry name" value="RNI-like"/>
    <property type="match status" value="1"/>
</dbReference>
<dbReference type="PROSITE" id="PS51450">
    <property type="entry name" value="LRR"/>
    <property type="match status" value="18"/>
</dbReference>
<keyword id="KW-0025">Alternative splicing</keyword>
<keyword id="KW-0963">Cytoplasm</keyword>
<keyword id="KW-0433">Leucine-rich repeat</keyword>
<keyword id="KW-0539">Nucleus</keyword>
<keyword id="KW-1185">Reference proteome</keyword>
<keyword id="KW-0677">Repeat</keyword>